<sequence>MANIKSQQKRNRTNERARLRNKAVKSSLRTAVRAFREAAHAGDKAKAAELLASTNRKLDKAASKGVIHKNQAANKKSALAQALNKL</sequence>
<reference key="1">
    <citation type="journal article" date="1998" name="Nature">
        <title>Deciphering the biology of Mycobacterium tuberculosis from the complete genome sequence.</title>
        <authorList>
            <person name="Cole S.T."/>
            <person name="Brosch R."/>
            <person name="Parkhill J."/>
            <person name="Garnier T."/>
            <person name="Churcher C.M."/>
            <person name="Harris D.E."/>
            <person name="Gordon S.V."/>
            <person name="Eiglmeier K."/>
            <person name="Gas S."/>
            <person name="Barry C.E. III"/>
            <person name="Tekaia F."/>
            <person name="Badcock K."/>
            <person name="Basham D."/>
            <person name="Brown D."/>
            <person name="Chillingworth T."/>
            <person name="Connor R."/>
            <person name="Davies R.M."/>
            <person name="Devlin K."/>
            <person name="Feltwell T."/>
            <person name="Gentles S."/>
            <person name="Hamlin N."/>
            <person name="Holroyd S."/>
            <person name="Hornsby T."/>
            <person name="Jagels K."/>
            <person name="Krogh A."/>
            <person name="McLean J."/>
            <person name="Moule S."/>
            <person name="Murphy L.D."/>
            <person name="Oliver S."/>
            <person name="Osborne J."/>
            <person name="Quail M.A."/>
            <person name="Rajandream M.A."/>
            <person name="Rogers J."/>
            <person name="Rutter S."/>
            <person name="Seeger K."/>
            <person name="Skelton S."/>
            <person name="Squares S."/>
            <person name="Squares R."/>
            <person name="Sulston J.E."/>
            <person name="Taylor K."/>
            <person name="Whitehead S."/>
            <person name="Barrell B.G."/>
        </authorList>
    </citation>
    <scope>NUCLEOTIDE SEQUENCE [LARGE SCALE GENOMIC DNA]</scope>
    <source>
        <strain>ATCC 25618 / H37Rv</strain>
    </source>
</reference>
<reference key="2">
    <citation type="journal article" date="2008" name="BMC Syst. Biol.">
        <title>targetTB: a target identification pipeline for Mycobacterium tuberculosis through an interactome, reactome and genome-scale structural analysis.</title>
        <authorList>
            <person name="Raman K."/>
            <person name="Yeturu K."/>
            <person name="Chandra N."/>
        </authorList>
    </citation>
    <scope>IDENTIFICATION AS A DRUG TARGET [LARGE SCALE ANALYSIS]</scope>
</reference>
<reference key="3">
    <citation type="journal article" date="2011" name="Mol. Cell. Proteomics">
        <title>Proteogenomic analysis of Mycobacterium tuberculosis by high resolution mass spectrometry.</title>
        <authorList>
            <person name="Kelkar D.S."/>
            <person name="Kumar D."/>
            <person name="Kumar P."/>
            <person name="Balakrishnan L."/>
            <person name="Muthusamy B."/>
            <person name="Yadav A.K."/>
            <person name="Shrivastava P."/>
            <person name="Marimuthu A."/>
            <person name="Anand S."/>
            <person name="Sundaram H."/>
            <person name="Kingsbury R."/>
            <person name="Harsha H.C."/>
            <person name="Nair B."/>
            <person name="Prasad T.S."/>
            <person name="Chauhan D.S."/>
            <person name="Katoch K."/>
            <person name="Katoch V.M."/>
            <person name="Kumar P."/>
            <person name="Chaerkady R."/>
            <person name="Ramachandran S."/>
            <person name="Dash D."/>
            <person name="Pandey A."/>
        </authorList>
    </citation>
    <scope>IDENTIFICATION BY MASS SPECTROMETRY [LARGE SCALE ANALYSIS]</scope>
    <source>
        <strain>ATCC 25618 / H37Rv</strain>
    </source>
</reference>
<organism>
    <name type="scientific">Mycobacterium tuberculosis (strain ATCC 25618 / H37Rv)</name>
    <dbReference type="NCBI Taxonomy" id="83332"/>
    <lineage>
        <taxon>Bacteria</taxon>
        <taxon>Bacillati</taxon>
        <taxon>Actinomycetota</taxon>
        <taxon>Actinomycetes</taxon>
        <taxon>Mycobacteriales</taxon>
        <taxon>Mycobacteriaceae</taxon>
        <taxon>Mycobacterium</taxon>
        <taxon>Mycobacterium tuberculosis complex</taxon>
    </lineage>
</organism>
<gene>
    <name evidence="1" type="primary">rpsT</name>
    <name type="ordered locus">Rv2412</name>
    <name type="ORF">MTCY253.08c</name>
</gene>
<name>RS20_MYCTU</name>
<protein>
    <recommendedName>
        <fullName evidence="1">Small ribosomal subunit protein bS20</fullName>
    </recommendedName>
    <alternativeName>
        <fullName evidence="3">30S ribosomal protein S20</fullName>
    </alternativeName>
</protein>
<keyword id="KW-0002">3D-structure</keyword>
<keyword id="KW-1185">Reference proteome</keyword>
<keyword id="KW-0687">Ribonucleoprotein</keyword>
<keyword id="KW-0689">Ribosomal protein</keyword>
<keyword id="KW-0694">RNA-binding</keyword>
<keyword id="KW-0699">rRNA-binding</keyword>
<proteinExistence type="evidence at protein level"/>
<comment type="function">
    <text evidence="1">Binds directly to 16S ribosomal RNA.</text>
</comment>
<comment type="miscellaneous">
    <text>Was identified as a high-confidence drug target.</text>
</comment>
<comment type="similarity">
    <text evidence="1">Belongs to the bacterial ribosomal protein bS20 family.</text>
</comment>
<accession>P9WH41</accession>
<accession>L0TB53</accession>
<accession>P66505</accession>
<accession>P71731</accession>
<dbReference type="EMBL" id="AL123456">
    <property type="protein sequence ID" value="CCP45203.1"/>
    <property type="molecule type" value="Genomic_DNA"/>
</dbReference>
<dbReference type="PIR" id="G70684">
    <property type="entry name" value="G70684"/>
</dbReference>
<dbReference type="RefSeq" id="NP_216928.1">
    <property type="nucleotide sequence ID" value="NC_000962.3"/>
</dbReference>
<dbReference type="RefSeq" id="WP_003899314.1">
    <property type="nucleotide sequence ID" value="NZ_NVQJ01000054.1"/>
</dbReference>
<dbReference type="PDB" id="5V93">
    <property type="method" value="EM"/>
    <property type="resolution" value="4.00 A"/>
    <property type="chains" value="t=1-86"/>
</dbReference>
<dbReference type="PDB" id="7KGB">
    <property type="method" value="EM"/>
    <property type="resolution" value="2.70 A"/>
    <property type="chains" value="t=1-86"/>
</dbReference>
<dbReference type="PDB" id="7MSC">
    <property type="method" value="EM"/>
    <property type="resolution" value="2.97 A"/>
    <property type="chains" value="t=1-86"/>
</dbReference>
<dbReference type="PDB" id="7MSH">
    <property type="method" value="EM"/>
    <property type="resolution" value="3.23 A"/>
    <property type="chains" value="t=1-86"/>
</dbReference>
<dbReference type="PDB" id="7MSM">
    <property type="method" value="EM"/>
    <property type="resolution" value="2.79 A"/>
    <property type="chains" value="t=1-86"/>
</dbReference>
<dbReference type="PDB" id="7MSZ">
    <property type="method" value="EM"/>
    <property type="resolution" value="3.10 A"/>
    <property type="chains" value="t=1-86"/>
</dbReference>
<dbReference type="PDB" id="7MT2">
    <property type="method" value="EM"/>
    <property type="resolution" value="2.76 A"/>
    <property type="chains" value="t=1-86"/>
</dbReference>
<dbReference type="PDB" id="7MT3">
    <property type="method" value="EM"/>
    <property type="resolution" value="2.80 A"/>
    <property type="chains" value="t=1-86"/>
</dbReference>
<dbReference type="PDB" id="7MT7">
    <property type="method" value="EM"/>
    <property type="resolution" value="2.71 A"/>
    <property type="chains" value="t=1-86"/>
</dbReference>
<dbReference type="PDB" id="7SFR">
    <property type="method" value="EM"/>
    <property type="resolution" value="2.60 A"/>
    <property type="chains" value="t=1-86"/>
</dbReference>
<dbReference type="PDBsum" id="5V93"/>
<dbReference type="PDBsum" id="7KGB"/>
<dbReference type="PDBsum" id="7MSC"/>
<dbReference type="PDBsum" id="7MSH"/>
<dbReference type="PDBsum" id="7MSM"/>
<dbReference type="PDBsum" id="7MSZ"/>
<dbReference type="PDBsum" id="7MT2"/>
<dbReference type="PDBsum" id="7MT3"/>
<dbReference type="PDBsum" id="7MT7"/>
<dbReference type="PDBsum" id="7SFR"/>
<dbReference type="EMDB" id="EMD-22865"/>
<dbReference type="EMDB" id="EMD-23961"/>
<dbReference type="EMDB" id="EMD-23962"/>
<dbReference type="EMDB" id="EMD-23969"/>
<dbReference type="EMDB" id="EMD-23972"/>
<dbReference type="EMDB" id="EMD-23974"/>
<dbReference type="EMDB" id="EMD-23975"/>
<dbReference type="EMDB" id="EMD-23976"/>
<dbReference type="EMDB" id="EMD-8645"/>
<dbReference type="SMR" id="P9WH41"/>
<dbReference type="FunCoup" id="P9WH41">
    <property type="interactions" value="84"/>
</dbReference>
<dbReference type="STRING" id="83332.Rv2412"/>
<dbReference type="PaxDb" id="83332-Rv2412"/>
<dbReference type="GeneID" id="885676"/>
<dbReference type="KEGG" id="mtu:Rv2412"/>
<dbReference type="KEGG" id="mtv:RVBD_2412"/>
<dbReference type="TubercuList" id="Rv2412"/>
<dbReference type="eggNOG" id="COG0268">
    <property type="taxonomic scope" value="Bacteria"/>
</dbReference>
<dbReference type="InParanoid" id="P9WH41"/>
<dbReference type="OrthoDB" id="9807974at2"/>
<dbReference type="PhylomeDB" id="P9WH41"/>
<dbReference type="PRO" id="PR:P9WH41"/>
<dbReference type="Proteomes" id="UP000001584">
    <property type="component" value="Chromosome"/>
</dbReference>
<dbReference type="GO" id="GO:0005829">
    <property type="term" value="C:cytosol"/>
    <property type="evidence" value="ECO:0007005"/>
    <property type="project" value="MTBBASE"/>
</dbReference>
<dbReference type="GO" id="GO:0015935">
    <property type="term" value="C:small ribosomal subunit"/>
    <property type="evidence" value="ECO:0000318"/>
    <property type="project" value="GO_Central"/>
</dbReference>
<dbReference type="GO" id="GO:0070181">
    <property type="term" value="F:small ribosomal subunit rRNA binding"/>
    <property type="evidence" value="ECO:0000318"/>
    <property type="project" value="GO_Central"/>
</dbReference>
<dbReference type="GO" id="GO:0003735">
    <property type="term" value="F:structural constituent of ribosome"/>
    <property type="evidence" value="ECO:0007669"/>
    <property type="project" value="InterPro"/>
</dbReference>
<dbReference type="GO" id="GO:0006412">
    <property type="term" value="P:translation"/>
    <property type="evidence" value="ECO:0007669"/>
    <property type="project" value="UniProtKB-UniRule"/>
</dbReference>
<dbReference type="FunFam" id="1.20.58.110:FF:000001">
    <property type="entry name" value="30S ribosomal protein S20"/>
    <property type="match status" value="1"/>
</dbReference>
<dbReference type="Gene3D" id="1.20.58.110">
    <property type="entry name" value="Ribosomal protein S20"/>
    <property type="match status" value="1"/>
</dbReference>
<dbReference type="HAMAP" id="MF_00500">
    <property type="entry name" value="Ribosomal_bS20"/>
    <property type="match status" value="1"/>
</dbReference>
<dbReference type="InterPro" id="IPR002583">
    <property type="entry name" value="Ribosomal_bS20"/>
</dbReference>
<dbReference type="InterPro" id="IPR036510">
    <property type="entry name" value="Ribosomal_bS20_sf"/>
</dbReference>
<dbReference type="NCBIfam" id="TIGR00029">
    <property type="entry name" value="S20"/>
    <property type="match status" value="1"/>
</dbReference>
<dbReference type="PANTHER" id="PTHR33398">
    <property type="entry name" value="30S RIBOSOMAL PROTEIN S20"/>
    <property type="match status" value="1"/>
</dbReference>
<dbReference type="PANTHER" id="PTHR33398:SF1">
    <property type="entry name" value="SMALL RIBOSOMAL SUBUNIT PROTEIN BS20C"/>
    <property type="match status" value="1"/>
</dbReference>
<dbReference type="Pfam" id="PF01649">
    <property type="entry name" value="Ribosomal_S20p"/>
    <property type="match status" value="1"/>
</dbReference>
<dbReference type="SUPFAM" id="SSF46992">
    <property type="entry name" value="Ribosomal protein S20"/>
    <property type="match status" value="1"/>
</dbReference>
<feature type="chain" id="PRO_0000167997" description="Small ribosomal subunit protein bS20">
    <location>
        <begin position="1"/>
        <end position="86"/>
    </location>
</feature>
<feature type="region of interest" description="Disordered" evidence="2">
    <location>
        <begin position="1"/>
        <end position="25"/>
    </location>
</feature>
<evidence type="ECO:0000255" key="1">
    <source>
        <dbReference type="HAMAP-Rule" id="MF_00500"/>
    </source>
</evidence>
<evidence type="ECO:0000256" key="2">
    <source>
        <dbReference type="SAM" id="MobiDB-lite"/>
    </source>
</evidence>
<evidence type="ECO:0000305" key="3"/>